<gene>
    <name evidence="4" type="primary">Sec6</name>
    <name evidence="4" type="ORF">CG5341</name>
</gene>
<accession>Q9V8K2</accession>
<accession>Q95TT4</accession>
<protein>
    <recommendedName>
        <fullName>Exocyst complex component 3</fullName>
    </recommendedName>
    <alternativeName>
        <fullName>Exocyst complex component Sec6</fullName>
    </alternativeName>
</protein>
<sequence length="738" mass="86664">MDLQQLEEQARQAALKDIQNMLQRPGQLEKVEQYRHRIARKKASVEALLKTGMQGQLDGVRVGLKQLETCMQDVREVRRRMDEVERLLRGVPEVYDALEVVREENTKHSQYATAMENLKHIFNVDASVQKTMALIEDDKLLNAHQCLADLENSRDDLLYELHKQPKQHASDKITLKRHFEKVDTVSQELEKKLRLILSRTLNTLRKKPTIIVTALRIIEREEKNDQFALQQQKVTGFLPPGRPKAWRRMIMDVLQQSVITRIEGSKLEERADNKMWLVRDLEILRQIILEDLRVVKSLCVPCFPPHYDIFGEYVKFYHEGLSSYLDNIVRSGLEGNEYVSMMAWVTHTYPGVELMSHPDLNVDVHRQIGTLLRPEHLKALEDEYLQNMQRNFQEWMTKAAETEKQEWFTETVPDQDEEYYHTSAPVIIFQMIDQHLQVTNTIHQELTFKALVMSIQQVEIFGQTYLKNVIELKEHHFRNRDQIKYFTHYIITIVNNSQQMVELAQQMKQLYWPKSRTEHYEDFERLLATFQRIRAHAASYLLEEAFLDMECHFNDLFTAKWLASNIAVDTICVTLDDYFQDYNHLRPNNFEMVINEAQKLLAKRYIRALLSKRLSKPRAECDAITRKIKTEAKRFKLFFEKIAPKISLSDSPLDLISTLSALLSSDIELLVLDLHTLLGSYPSLNEDHLVRLFYIRNDVKAAEVREKVQDAMKSKKAMVSIAKQDCIFKEIVFSDKLW</sequence>
<dbReference type="EMBL" id="AE013599">
    <property type="protein sequence ID" value="AAF57664.2"/>
    <property type="molecule type" value="Genomic_DNA"/>
</dbReference>
<dbReference type="EMBL" id="AY058549">
    <property type="protein sequence ID" value="AAL13778.1"/>
    <property type="molecule type" value="mRNA"/>
</dbReference>
<dbReference type="RefSeq" id="NP_611351.1">
    <property type="nucleotide sequence ID" value="NM_137507.5"/>
</dbReference>
<dbReference type="SMR" id="Q9V8K2"/>
<dbReference type="BioGRID" id="62816">
    <property type="interactions" value="29"/>
</dbReference>
<dbReference type="ComplexPortal" id="CPX-2465">
    <property type="entry name" value="Exocyst"/>
</dbReference>
<dbReference type="DIP" id="DIP-18668N"/>
<dbReference type="FunCoup" id="Q9V8K2">
    <property type="interactions" value="1380"/>
</dbReference>
<dbReference type="IntAct" id="Q9V8K2">
    <property type="interactions" value="5"/>
</dbReference>
<dbReference type="STRING" id="7227.FBpp0085888"/>
<dbReference type="PaxDb" id="7227-FBpp0085888"/>
<dbReference type="DNASU" id="37142"/>
<dbReference type="EnsemblMetazoa" id="FBtr0086709">
    <property type="protein sequence ID" value="FBpp0085888"/>
    <property type="gene ID" value="FBgn0266671"/>
</dbReference>
<dbReference type="GeneID" id="37142"/>
<dbReference type="KEGG" id="dme:Dmel_CG5341"/>
<dbReference type="AGR" id="FB:FBgn0266671"/>
<dbReference type="CTD" id="37142"/>
<dbReference type="FlyBase" id="FBgn0266671">
    <property type="gene designation" value="Sec6"/>
</dbReference>
<dbReference type="VEuPathDB" id="VectorBase:FBgn0266671"/>
<dbReference type="eggNOG" id="KOG2286">
    <property type="taxonomic scope" value="Eukaryota"/>
</dbReference>
<dbReference type="GeneTree" id="ENSGT01030000234613"/>
<dbReference type="HOGENOM" id="CLU_016260_1_0_1"/>
<dbReference type="InParanoid" id="Q9V8K2"/>
<dbReference type="OMA" id="MNIGPKT"/>
<dbReference type="OrthoDB" id="10047020at2759"/>
<dbReference type="PhylomeDB" id="Q9V8K2"/>
<dbReference type="Reactome" id="R-DME-264876">
    <property type="pathway name" value="Insulin processing"/>
</dbReference>
<dbReference type="Reactome" id="R-DME-5620916">
    <property type="pathway name" value="VxPx cargo-targeting to cilium"/>
</dbReference>
<dbReference type="SignaLink" id="Q9V8K2"/>
<dbReference type="BioGRID-ORCS" id="37142">
    <property type="hits" value="0 hits in 3 CRISPR screens"/>
</dbReference>
<dbReference type="GenomeRNAi" id="37142"/>
<dbReference type="PRO" id="PR:Q9V8K2"/>
<dbReference type="Proteomes" id="UP000000803">
    <property type="component" value="Chromosome 2R"/>
</dbReference>
<dbReference type="Bgee" id="FBgn0266671">
    <property type="expression patterns" value="Expressed in T neuron T5b (Drosophila) in embryonic/larval optic lobe (Drosophila) and 45 other cell types or tissues"/>
</dbReference>
<dbReference type="GO" id="GO:0005737">
    <property type="term" value="C:cytoplasm"/>
    <property type="evidence" value="ECO:0000314"/>
    <property type="project" value="FlyBase"/>
</dbReference>
<dbReference type="GO" id="GO:0000145">
    <property type="term" value="C:exocyst"/>
    <property type="evidence" value="ECO:0000314"/>
    <property type="project" value="FlyBase"/>
</dbReference>
<dbReference type="GO" id="GO:0016020">
    <property type="term" value="C:membrane"/>
    <property type="evidence" value="ECO:0000314"/>
    <property type="project" value="FlyBase"/>
</dbReference>
<dbReference type="GO" id="GO:0098793">
    <property type="term" value="C:presynapse"/>
    <property type="evidence" value="ECO:0007669"/>
    <property type="project" value="GOC"/>
</dbReference>
<dbReference type="GO" id="GO:0016028">
    <property type="term" value="C:rhabdomere"/>
    <property type="evidence" value="ECO:0000314"/>
    <property type="project" value="FlyBase"/>
</dbReference>
<dbReference type="GO" id="GO:0005915">
    <property type="term" value="C:zonula adherens"/>
    <property type="evidence" value="ECO:0000314"/>
    <property type="project" value="FlyBase"/>
</dbReference>
<dbReference type="GO" id="GO:0000149">
    <property type="term" value="F:SNARE binding"/>
    <property type="evidence" value="ECO:0000250"/>
    <property type="project" value="FlyBase"/>
</dbReference>
<dbReference type="GO" id="GO:0007298">
    <property type="term" value="P:border follicle cell migration"/>
    <property type="evidence" value="ECO:0000315"/>
    <property type="project" value="FlyBase"/>
</dbReference>
<dbReference type="GO" id="GO:0032456">
    <property type="term" value="P:endocytic recycling"/>
    <property type="evidence" value="ECO:0000315"/>
    <property type="project" value="FlyBase"/>
</dbReference>
<dbReference type="GO" id="GO:0051601">
    <property type="term" value="P:exocyst localization"/>
    <property type="evidence" value="ECO:0000318"/>
    <property type="project" value="GO_Central"/>
</dbReference>
<dbReference type="GO" id="GO:0006887">
    <property type="term" value="P:exocytosis"/>
    <property type="evidence" value="ECO:0000315"/>
    <property type="project" value="FlyBase"/>
</dbReference>
<dbReference type="GO" id="GO:0030707">
    <property type="term" value="P:follicle cell of egg chamber development"/>
    <property type="evidence" value="ECO:0000315"/>
    <property type="project" value="FlyBase"/>
</dbReference>
<dbReference type="GO" id="GO:0043001">
    <property type="term" value="P:Golgi to plasma membrane protein transport"/>
    <property type="evidence" value="ECO:0000315"/>
    <property type="project" value="FlyBase"/>
</dbReference>
<dbReference type="GO" id="GO:0007269">
    <property type="term" value="P:neurotransmitter secretion"/>
    <property type="evidence" value="ECO:0000303"/>
    <property type="project" value="FlyBase"/>
</dbReference>
<dbReference type="GO" id="GO:0007009">
    <property type="term" value="P:plasma membrane organization"/>
    <property type="evidence" value="ECO:0000315"/>
    <property type="project" value="FlyBase"/>
</dbReference>
<dbReference type="GO" id="GO:0072697">
    <property type="term" value="P:protein localization to cell cortex"/>
    <property type="evidence" value="ECO:0000315"/>
    <property type="project" value="FlyBase"/>
</dbReference>
<dbReference type="GO" id="GO:0072659">
    <property type="term" value="P:protein localization to plasma membrane"/>
    <property type="evidence" value="ECO:0000315"/>
    <property type="project" value="FlyBase"/>
</dbReference>
<dbReference type="GO" id="GO:0045313">
    <property type="term" value="P:rhabdomere membrane biogenesis"/>
    <property type="evidence" value="ECO:0000315"/>
    <property type="project" value="FlyBase"/>
</dbReference>
<dbReference type="GO" id="GO:0016081">
    <property type="term" value="P:synaptic vesicle docking"/>
    <property type="evidence" value="ECO:0000303"/>
    <property type="project" value="FlyBase"/>
</dbReference>
<dbReference type="GO" id="GO:0016080">
    <property type="term" value="P:synaptic vesicle targeting"/>
    <property type="evidence" value="ECO:0000303"/>
    <property type="project" value="FlyBase"/>
</dbReference>
<dbReference type="GO" id="GO:0016192">
    <property type="term" value="P:vesicle-mediated transport"/>
    <property type="evidence" value="ECO:0000250"/>
    <property type="project" value="FlyBase"/>
</dbReference>
<dbReference type="FunFam" id="1.10.357.70:FF:000001">
    <property type="entry name" value="Exocyst complex component 3"/>
    <property type="match status" value="1"/>
</dbReference>
<dbReference type="FunFam" id="1.10.357.50:FF:000010">
    <property type="entry name" value="exocyst complex component 3"/>
    <property type="match status" value="1"/>
</dbReference>
<dbReference type="Gene3D" id="1.10.357.50">
    <property type="match status" value="1"/>
</dbReference>
<dbReference type="Gene3D" id="1.10.357.70">
    <property type="entry name" value="Exocyst complex component Sec6, C-terminal domain"/>
    <property type="match status" value="1"/>
</dbReference>
<dbReference type="InterPro" id="IPR010326">
    <property type="entry name" value="EXOC3/Sec6"/>
</dbReference>
<dbReference type="InterPro" id="IPR042532">
    <property type="entry name" value="EXOC3/Sec6_C"/>
</dbReference>
<dbReference type="PANTHER" id="PTHR21292:SF1">
    <property type="entry name" value="EXOCYST COMPLEX COMPONENT 3"/>
    <property type="match status" value="1"/>
</dbReference>
<dbReference type="PANTHER" id="PTHR21292">
    <property type="entry name" value="EXOCYST COMPLEX COMPONENT SEC6-RELATED"/>
    <property type="match status" value="1"/>
</dbReference>
<dbReference type="Pfam" id="PF06046">
    <property type="entry name" value="Sec6"/>
    <property type="match status" value="1"/>
</dbReference>
<organism>
    <name type="scientific">Drosophila melanogaster</name>
    <name type="common">Fruit fly</name>
    <dbReference type="NCBI Taxonomy" id="7227"/>
    <lineage>
        <taxon>Eukaryota</taxon>
        <taxon>Metazoa</taxon>
        <taxon>Ecdysozoa</taxon>
        <taxon>Arthropoda</taxon>
        <taxon>Hexapoda</taxon>
        <taxon>Insecta</taxon>
        <taxon>Pterygota</taxon>
        <taxon>Neoptera</taxon>
        <taxon>Endopterygota</taxon>
        <taxon>Diptera</taxon>
        <taxon>Brachycera</taxon>
        <taxon>Muscomorpha</taxon>
        <taxon>Ephydroidea</taxon>
        <taxon>Drosophilidae</taxon>
        <taxon>Drosophila</taxon>
        <taxon>Sophophora</taxon>
    </lineage>
</organism>
<name>EXOC3_DROME</name>
<reference key="1">
    <citation type="journal article" date="2000" name="Science">
        <title>The genome sequence of Drosophila melanogaster.</title>
        <authorList>
            <person name="Adams M.D."/>
            <person name="Celniker S.E."/>
            <person name="Holt R.A."/>
            <person name="Evans C.A."/>
            <person name="Gocayne J.D."/>
            <person name="Amanatides P.G."/>
            <person name="Scherer S.E."/>
            <person name="Li P.W."/>
            <person name="Hoskins R.A."/>
            <person name="Galle R.F."/>
            <person name="George R.A."/>
            <person name="Lewis S.E."/>
            <person name="Richards S."/>
            <person name="Ashburner M."/>
            <person name="Henderson S.N."/>
            <person name="Sutton G.G."/>
            <person name="Wortman J.R."/>
            <person name="Yandell M.D."/>
            <person name="Zhang Q."/>
            <person name="Chen L.X."/>
            <person name="Brandon R.C."/>
            <person name="Rogers Y.-H.C."/>
            <person name="Blazej R.G."/>
            <person name="Champe M."/>
            <person name="Pfeiffer B.D."/>
            <person name="Wan K.H."/>
            <person name="Doyle C."/>
            <person name="Baxter E.G."/>
            <person name="Helt G."/>
            <person name="Nelson C.R."/>
            <person name="Miklos G.L.G."/>
            <person name="Abril J.F."/>
            <person name="Agbayani A."/>
            <person name="An H.-J."/>
            <person name="Andrews-Pfannkoch C."/>
            <person name="Baldwin D."/>
            <person name="Ballew R.M."/>
            <person name="Basu A."/>
            <person name="Baxendale J."/>
            <person name="Bayraktaroglu L."/>
            <person name="Beasley E.M."/>
            <person name="Beeson K.Y."/>
            <person name="Benos P.V."/>
            <person name="Berman B.P."/>
            <person name="Bhandari D."/>
            <person name="Bolshakov S."/>
            <person name="Borkova D."/>
            <person name="Botchan M.R."/>
            <person name="Bouck J."/>
            <person name="Brokstein P."/>
            <person name="Brottier P."/>
            <person name="Burtis K.C."/>
            <person name="Busam D.A."/>
            <person name="Butler H."/>
            <person name="Cadieu E."/>
            <person name="Center A."/>
            <person name="Chandra I."/>
            <person name="Cherry J.M."/>
            <person name="Cawley S."/>
            <person name="Dahlke C."/>
            <person name="Davenport L.B."/>
            <person name="Davies P."/>
            <person name="de Pablos B."/>
            <person name="Delcher A."/>
            <person name="Deng Z."/>
            <person name="Mays A.D."/>
            <person name="Dew I."/>
            <person name="Dietz S.M."/>
            <person name="Dodson K."/>
            <person name="Doup L.E."/>
            <person name="Downes M."/>
            <person name="Dugan-Rocha S."/>
            <person name="Dunkov B.C."/>
            <person name="Dunn P."/>
            <person name="Durbin K.J."/>
            <person name="Evangelista C.C."/>
            <person name="Ferraz C."/>
            <person name="Ferriera S."/>
            <person name="Fleischmann W."/>
            <person name="Fosler C."/>
            <person name="Gabrielian A.E."/>
            <person name="Garg N.S."/>
            <person name="Gelbart W.M."/>
            <person name="Glasser K."/>
            <person name="Glodek A."/>
            <person name="Gong F."/>
            <person name="Gorrell J.H."/>
            <person name="Gu Z."/>
            <person name="Guan P."/>
            <person name="Harris M."/>
            <person name="Harris N.L."/>
            <person name="Harvey D.A."/>
            <person name="Heiman T.J."/>
            <person name="Hernandez J.R."/>
            <person name="Houck J."/>
            <person name="Hostin D."/>
            <person name="Houston K.A."/>
            <person name="Howland T.J."/>
            <person name="Wei M.-H."/>
            <person name="Ibegwam C."/>
            <person name="Jalali M."/>
            <person name="Kalush F."/>
            <person name="Karpen G.H."/>
            <person name="Ke Z."/>
            <person name="Kennison J.A."/>
            <person name="Ketchum K.A."/>
            <person name="Kimmel B.E."/>
            <person name="Kodira C.D."/>
            <person name="Kraft C.L."/>
            <person name="Kravitz S."/>
            <person name="Kulp D."/>
            <person name="Lai Z."/>
            <person name="Lasko P."/>
            <person name="Lei Y."/>
            <person name="Levitsky A.A."/>
            <person name="Li J.H."/>
            <person name="Li Z."/>
            <person name="Liang Y."/>
            <person name="Lin X."/>
            <person name="Liu X."/>
            <person name="Mattei B."/>
            <person name="McIntosh T.C."/>
            <person name="McLeod M.P."/>
            <person name="McPherson D."/>
            <person name="Merkulov G."/>
            <person name="Milshina N.V."/>
            <person name="Mobarry C."/>
            <person name="Morris J."/>
            <person name="Moshrefi A."/>
            <person name="Mount S.M."/>
            <person name="Moy M."/>
            <person name="Murphy B."/>
            <person name="Murphy L."/>
            <person name="Muzny D.M."/>
            <person name="Nelson D.L."/>
            <person name="Nelson D.R."/>
            <person name="Nelson K.A."/>
            <person name="Nixon K."/>
            <person name="Nusskern D.R."/>
            <person name="Pacleb J.M."/>
            <person name="Palazzolo M."/>
            <person name="Pittman G.S."/>
            <person name="Pan S."/>
            <person name="Pollard J."/>
            <person name="Puri V."/>
            <person name="Reese M.G."/>
            <person name="Reinert K."/>
            <person name="Remington K."/>
            <person name="Saunders R.D.C."/>
            <person name="Scheeler F."/>
            <person name="Shen H."/>
            <person name="Shue B.C."/>
            <person name="Siden-Kiamos I."/>
            <person name="Simpson M."/>
            <person name="Skupski M.P."/>
            <person name="Smith T.J."/>
            <person name="Spier E."/>
            <person name="Spradling A.C."/>
            <person name="Stapleton M."/>
            <person name="Strong R."/>
            <person name="Sun E."/>
            <person name="Svirskas R."/>
            <person name="Tector C."/>
            <person name="Turner R."/>
            <person name="Venter E."/>
            <person name="Wang A.H."/>
            <person name="Wang X."/>
            <person name="Wang Z.-Y."/>
            <person name="Wassarman D.A."/>
            <person name="Weinstock G.M."/>
            <person name="Weissenbach J."/>
            <person name="Williams S.M."/>
            <person name="Woodage T."/>
            <person name="Worley K.C."/>
            <person name="Wu D."/>
            <person name="Yang S."/>
            <person name="Yao Q.A."/>
            <person name="Ye J."/>
            <person name="Yeh R.-F."/>
            <person name="Zaveri J.S."/>
            <person name="Zhan M."/>
            <person name="Zhang G."/>
            <person name="Zhao Q."/>
            <person name="Zheng L."/>
            <person name="Zheng X.H."/>
            <person name="Zhong F.N."/>
            <person name="Zhong W."/>
            <person name="Zhou X."/>
            <person name="Zhu S.C."/>
            <person name="Zhu X."/>
            <person name="Smith H.O."/>
            <person name="Gibbs R.A."/>
            <person name="Myers E.W."/>
            <person name="Rubin G.M."/>
            <person name="Venter J.C."/>
        </authorList>
    </citation>
    <scope>NUCLEOTIDE SEQUENCE [LARGE SCALE GENOMIC DNA]</scope>
    <source>
        <strain>Berkeley</strain>
    </source>
</reference>
<reference key="2">
    <citation type="journal article" date="2002" name="Genome Biol.">
        <title>Annotation of the Drosophila melanogaster euchromatic genome: a systematic review.</title>
        <authorList>
            <person name="Misra S."/>
            <person name="Crosby M.A."/>
            <person name="Mungall C.J."/>
            <person name="Matthews B.B."/>
            <person name="Campbell K.S."/>
            <person name="Hradecky P."/>
            <person name="Huang Y."/>
            <person name="Kaminker J.S."/>
            <person name="Millburn G.H."/>
            <person name="Prochnik S.E."/>
            <person name="Smith C.D."/>
            <person name="Tupy J.L."/>
            <person name="Whitfield E.J."/>
            <person name="Bayraktaroglu L."/>
            <person name="Berman B.P."/>
            <person name="Bettencourt B.R."/>
            <person name="Celniker S.E."/>
            <person name="de Grey A.D.N.J."/>
            <person name="Drysdale R.A."/>
            <person name="Harris N.L."/>
            <person name="Richter J."/>
            <person name="Russo S."/>
            <person name="Schroeder A.J."/>
            <person name="Shu S.Q."/>
            <person name="Stapleton M."/>
            <person name="Yamada C."/>
            <person name="Ashburner M."/>
            <person name="Gelbart W.M."/>
            <person name="Rubin G.M."/>
            <person name="Lewis S.E."/>
        </authorList>
    </citation>
    <scope>GENOME REANNOTATION</scope>
    <source>
        <strain>Berkeley</strain>
    </source>
</reference>
<reference key="3">
    <citation type="journal article" date="2002" name="Genome Biol.">
        <title>A Drosophila full-length cDNA resource.</title>
        <authorList>
            <person name="Stapleton M."/>
            <person name="Carlson J.W."/>
            <person name="Brokstein P."/>
            <person name="Yu C."/>
            <person name="Champe M."/>
            <person name="George R.A."/>
            <person name="Guarin H."/>
            <person name="Kronmiller B."/>
            <person name="Pacleb J.M."/>
            <person name="Park S."/>
            <person name="Wan K.H."/>
            <person name="Rubin G.M."/>
            <person name="Celniker S.E."/>
        </authorList>
    </citation>
    <scope>NUCLEOTIDE SEQUENCE [LARGE SCALE MRNA]</scope>
    <source>
        <strain>Berkeley</strain>
        <tissue>Embryo</tissue>
    </source>
</reference>
<comment type="function">
    <text>Component of the exocyst complex involved in the docking of exocytic vesicles with fusion sites on the plasma membrane.</text>
</comment>
<comment type="subunit">
    <text evidence="1">The exocyst complex is composed of Sec3/Exoc1, Sec5/Exoc2, Sec6/Exoc3, Sec8/Exoc4, Sec10/Exoc5, Sec15/Exoc6, Exo70/Exoc7 and Exo84/Exoc8.</text>
</comment>
<comment type="similarity">
    <text evidence="3">Belongs to the SEC6 family.</text>
</comment>
<proteinExistence type="evidence at transcript level"/>
<feature type="chain" id="PRO_0000118929" description="Exocyst complex component 3">
    <location>
        <begin position="1"/>
        <end position="738"/>
    </location>
</feature>
<feature type="coiled-coil region" evidence="2">
    <location>
        <begin position="28"/>
        <end position="91"/>
    </location>
</feature>
<evidence type="ECO:0000250" key="1"/>
<evidence type="ECO:0000255" key="2"/>
<evidence type="ECO:0000305" key="3"/>
<evidence type="ECO:0000312" key="4">
    <source>
        <dbReference type="FlyBase" id="FBgn0266671"/>
    </source>
</evidence>
<keyword id="KW-0175">Coiled coil</keyword>
<keyword id="KW-0268">Exocytosis</keyword>
<keyword id="KW-0653">Protein transport</keyword>
<keyword id="KW-1185">Reference proteome</keyword>
<keyword id="KW-0813">Transport</keyword>